<organism>
    <name type="scientific">Syntrophotalea carbinolica (strain DSM 2380 / NBRC 103641 / GraBd1)</name>
    <name type="common">Pelobacter carbinolicus</name>
    <dbReference type="NCBI Taxonomy" id="338963"/>
    <lineage>
        <taxon>Bacteria</taxon>
        <taxon>Pseudomonadati</taxon>
        <taxon>Thermodesulfobacteriota</taxon>
        <taxon>Desulfuromonadia</taxon>
        <taxon>Desulfuromonadales</taxon>
        <taxon>Syntrophotaleaceae</taxon>
        <taxon>Syntrophotalea</taxon>
    </lineage>
</organism>
<evidence type="ECO:0000255" key="1">
    <source>
        <dbReference type="HAMAP-Rule" id="MF_00459"/>
    </source>
</evidence>
<protein>
    <recommendedName>
        <fullName evidence="1">Ion-translocating oxidoreductase complex subunit A</fullName>
        <ecNumber evidence="1">7.-.-.-</ecNumber>
    </recommendedName>
    <alternativeName>
        <fullName evidence="1">Rnf electron transport complex subunit A</fullName>
    </alternativeName>
</protein>
<sequence>MKNLLLILIGAVLVNNFVLARFLGLCPFLGVSRKVETALGMGMAVTFVMVVASGCTWVLQYLVLTPYHLDYLQTIAFILVIATLVQMVEMIVRKSSPVLYQSLGIFLPLITTNCAVLGLAVLNIQQGYSFVQSLVFAFGGAVGFTLALVLFAGLRERLRLCPVPAAFRGTPIELITAGLLALAFMGFAGLVPG</sequence>
<reference key="1">
    <citation type="submission" date="2005-10" db="EMBL/GenBank/DDBJ databases">
        <title>Complete sequence of Pelobacter carbinolicus DSM 2380.</title>
        <authorList>
            <person name="Copeland A."/>
            <person name="Lucas S."/>
            <person name="Lapidus A."/>
            <person name="Barry K."/>
            <person name="Detter J.C."/>
            <person name="Glavina T."/>
            <person name="Hammon N."/>
            <person name="Israni S."/>
            <person name="Pitluck S."/>
            <person name="Chertkov O."/>
            <person name="Schmutz J."/>
            <person name="Larimer F."/>
            <person name="Land M."/>
            <person name="Kyrpides N."/>
            <person name="Ivanova N."/>
            <person name="Richardson P."/>
        </authorList>
    </citation>
    <scope>NUCLEOTIDE SEQUENCE [LARGE SCALE GENOMIC DNA]</scope>
    <source>
        <strain>DSM 2380 / NBRC 103641 / GraBd1</strain>
    </source>
</reference>
<name>RNFA_SYNC1</name>
<accession>Q3A7W6</accession>
<keyword id="KW-0997">Cell inner membrane</keyword>
<keyword id="KW-1003">Cell membrane</keyword>
<keyword id="KW-0249">Electron transport</keyword>
<keyword id="KW-0472">Membrane</keyword>
<keyword id="KW-1185">Reference proteome</keyword>
<keyword id="KW-1278">Translocase</keyword>
<keyword id="KW-0812">Transmembrane</keyword>
<keyword id="KW-1133">Transmembrane helix</keyword>
<keyword id="KW-0813">Transport</keyword>
<gene>
    <name evidence="1" type="primary">rnfA</name>
    <name type="ordered locus">Pcar_0265</name>
</gene>
<dbReference type="EC" id="7.-.-.-" evidence="1"/>
<dbReference type="EMBL" id="CP000142">
    <property type="protein sequence ID" value="ABA87526.1"/>
    <property type="molecule type" value="Genomic_DNA"/>
</dbReference>
<dbReference type="RefSeq" id="WP_011339934.1">
    <property type="nucleotide sequence ID" value="NC_007498.2"/>
</dbReference>
<dbReference type="SMR" id="Q3A7W6"/>
<dbReference type="STRING" id="338963.Pcar_0265"/>
<dbReference type="KEGG" id="pca:Pcar_0265"/>
<dbReference type="eggNOG" id="COG4657">
    <property type="taxonomic scope" value="Bacteria"/>
</dbReference>
<dbReference type="HOGENOM" id="CLU_095255_1_0_7"/>
<dbReference type="OrthoDB" id="9803631at2"/>
<dbReference type="Proteomes" id="UP000002534">
    <property type="component" value="Chromosome"/>
</dbReference>
<dbReference type="GO" id="GO:0005886">
    <property type="term" value="C:plasma membrane"/>
    <property type="evidence" value="ECO:0007669"/>
    <property type="project" value="UniProtKB-SubCell"/>
</dbReference>
<dbReference type="GO" id="GO:0022900">
    <property type="term" value="P:electron transport chain"/>
    <property type="evidence" value="ECO:0007669"/>
    <property type="project" value="UniProtKB-UniRule"/>
</dbReference>
<dbReference type="HAMAP" id="MF_00459">
    <property type="entry name" value="RsxA_RnfA"/>
    <property type="match status" value="1"/>
</dbReference>
<dbReference type="InterPro" id="IPR011293">
    <property type="entry name" value="Ion_transpt_RnfA/RsxA"/>
</dbReference>
<dbReference type="InterPro" id="IPR003667">
    <property type="entry name" value="NqrDE/RnfAE"/>
</dbReference>
<dbReference type="InterPro" id="IPR050133">
    <property type="entry name" value="NqrDE/RnfAE_oxidrdctase"/>
</dbReference>
<dbReference type="NCBIfam" id="NF003481">
    <property type="entry name" value="PRK05151.1"/>
    <property type="match status" value="1"/>
</dbReference>
<dbReference type="NCBIfam" id="TIGR01943">
    <property type="entry name" value="rnfA"/>
    <property type="match status" value="1"/>
</dbReference>
<dbReference type="PANTHER" id="PTHR30335">
    <property type="entry name" value="INTEGRAL MEMBRANE PROTEIN OF SOXR-REDUCING COMPLEX"/>
    <property type="match status" value="1"/>
</dbReference>
<dbReference type="PANTHER" id="PTHR30335:SF0">
    <property type="entry name" value="ION-TRANSLOCATING OXIDOREDUCTASE COMPLEX SUBUNIT A"/>
    <property type="match status" value="1"/>
</dbReference>
<dbReference type="Pfam" id="PF02508">
    <property type="entry name" value="Rnf-Nqr"/>
    <property type="match status" value="1"/>
</dbReference>
<dbReference type="PIRSF" id="PIRSF006102">
    <property type="entry name" value="NQR_DE"/>
    <property type="match status" value="1"/>
</dbReference>
<feature type="chain" id="PRO_1000013536" description="Ion-translocating oxidoreductase complex subunit A">
    <location>
        <begin position="1"/>
        <end position="193"/>
    </location>
</feature>
<feature type="transmembrane region" description="Helical" evidence="1">
    <location>
        <begin position="4"/>
        <end position="24"/>
    </location>
</feature>
<feature type="transmembrane region" description="Helical" evidence="1">
    <location>
        <begin position="39"/>
        <end position="59"/>
    </location>
</feature>
<feature type="transmembrane region" description="Helical" evidence="1">
    <location>
        <begin position="72"/>
        <end position="92"/>
    </location>
</feature>
<feature type="transmembrane region" description="Helical" evidence="1">
    <location>
        <begin position="102"/>
        <end position="122"/>
    </location>
</feature>
<feature type="transmembrane region" description="Helical" evidence="1">
    <location>
        <begin position="134"/>
        <end position="154"/>
    </location>
</feature>
<feature type="transmembrane region" description="Helical" evidence="1">
    <location>
        <begin position="171"/>
        <end position="191"/>
    </location>
</feature>
<comment type="function">
    <text evidence="1">Part of a membrane-bound complex that couples electron transfer with translocation of ions across the membrane.</text>
</comment>
<comment type="subunit">
    <text evidence="1">The complex is composed of six subunits: RnfA, RnfB, RnfC, RnfD, RnfE and RnfG.</text>
</comment>
<comment type="subcellular location">
    <subcellularLocation>
        <location evidence="1">Cell inner membrane</location>
        <topology evidence="1">Multi-pass membrane protein</topology>
    </subcellularLocation>
</comment>
<comment type="similarity">
    <text evidence="1">Belongs to the NqrDE/RnfAE family.</text>
</comment>
<proteinExistence type="inferred from homology"/>